<proteinExistence type="inferred from homology"/>
<organism>
    <name type="scientific">Porphyromonas cangingivalis</name>
    <dbReference type="NCBI Taxonomy" id="36874"/>
    <lineage>
        <taxon>Bacteria</taxon>
        <taxon>Pseudomonadati</taxon>
        <taxon>Bacteroidota</taxon>
        <taxon>Bacteroidia</taxon>
        <taxon>Bacteroidales</taxon>
        <taxon>Porphyromonadaceae</taxon>
        <taxon>Porphyromonas</taxon>
    </lineage>
</organism>
<evidence type="ECO:0000255" key="1">
    <source>
        <dbReference type="HAMAP-Rule" id="MF_01321"/>
    </source>
</evidence>
<comment type="function">
    <text evidence="1">DNA-dependent RNA polymerase catalyzes the transcription of DNA into RNA using the four ribonucleoside triphosphates as substrates.</text>
</comment>
<comment type="catalytic activity">
    <reaction evidence="1">
        <text>RNA(n) + a ribonucleoside 5'-triphosphate = RNA(n+1) + diphosphate</text>
        <dbReference type="Rhea" id="RHEA:21248"/>
        <dbReference type="Rhea" id="RHEA-COMP:14527"/>
        <dbReference type="Rhea" id="RHEA-COMP:17342"/>
        <dbReference type="ChEBI" id="CHEBI:33019"/>
        <dbReference type="ChEBI" id="CHEBI:61557"/>
        <dbReference type="ChEBI" id="CHEBI:140395"/>
        <dbReference type="EC" id="2.7.7.6"/>
    </reaction>
</comment>
<comment type="subunit">
    <text evidence="1">The RNAP catalytic core consists of 2 alpha, 1 beta, 1 beta' and 1 omega subunit. When a sigma factor is associated with the core the holoenzyme is formed, which can initiate transcription.</text>
</comment>
<comment type="similarity">
    <text evidence="1">Belongs to the RNA polymerase beta chain family.</text>
</comment>
<feature type="chain" id="PRO_0000047935" description="DNA-directed RNA polymerase subunit beta">
    <location>
        <begin position="1"/>
        <end position="1270"/>
    </location>
</feature>
<accession>Q9F3X8</accession>
<gene>
    <name evidence="1" type="primary">rpoB</name>
</gene>
<name>RPOB_PORCN</name>
<keyword id="KW-0240">DNA-directed RNA polymerase</keyword>
<keyword id="KW-0548">Nucleotidyltransferase</keyword>
<keyword id="KW-0804">Transcription</keyword>
<keyword id="KW-0808">Transferase</keyword>
<sequence>MSSHNPTQRVNFASIKNPMEYADFLDVQLKSFKDFLQLDTPPEKRKKEGLYKVFAENFPIHDTRNNFVLEFLDYYIDPPRYTLDECISRGLTYNVPLKAKMKLYCTDPEHEDFETVIQDVYLGPIPYMTESGTFIINGAERVVVSQMHRSPGVFFSESVHPNGTKLFSARIIPFKGSWIEFATDINNVMYAYIDRKKKLPVTTLLRAIGFETDKDILNLFGIAEEVKVSKSTLKKYYGRKIAARVLNSWIEDLVDEETGEVVSMERYDVIVDRDELLTEDNVDQIIESGAKNILITKDDSELGLDYSVTTNTLQKDPSNSEKEAVYHIYKQLRNQDPVDDASAREVINSLFFSEKRYDLGDVGRYRINKKLGINIDEETKVLTTEDITAIIAHLVELMNSKQVVDDIDHLSNRRVRTVGEQLYNQFGIGLARMARTVRERMNVRDNEVFTPIDLINAKTISSVVNSFFGTNALSQFMDRTNPLAEITHKRRLSSLGPGGLSRDRAGFEVRDVHYTHYGRLCPIETPEGPNIGLISSLCVYAKINDLGFISTPYRKVVDGKVDFSENGVEYYTAEAEDDKTVAQGNAPLDENGKFIKDAVYARYGSDFPVVSPSEIDLMDVSPIQIASIAASLIPFLEHDDANRALMGSNMMRQAVPLIHSDAPIVGTGVEQKLVHDSRTQIVAEGAGTVEFVDASVIKIRYDRSEDDTFVSFEDNLKIYNLPKFRKTNQSTTIDLRPICRKGDRVEKGDILTEGYSTENGELALGRNVQVAYMPWKGYNYEDAIVLNERMVREDIFTSVHVDEYILEVRETKRGLEELTSDIPNVSEEATKDLDDRGIIRVGARVHPGDILIGKITPKGESDPTPEEKLLHAIFGDKAGDVKDASLKANPSLSGVVIKTHLFSKAMHSKKDKGGVREIVKKLDEEMEEKLAELRELMLKKLIQLTDNKLSNGIRNFEDTEIVPKGVKLTPAVCSKIEFGEVAIFNWTGDEHTDELVAKLISNYLRKAKEIESEYRRKKFDATIGDELPNGIIQIAKVLIAKKRKIQVGDKMAGRHGNKGIVSKIVRQEDMPFMEDGTPMDLCLNPLGVPSRMNLGQIFELSSMGSRRLDVKFATPIFDGASLDDLDQWTDKAGIPRYGKTYLYDGGTGEQFDQPATVGVTYFLKLGHMVDDKMHARSIGPYSLITQQPLGGKAQFGGQRFGEMEVWALEAYGAAHVLQEMLTIKSDDVVGRSKAYEAIVKGAPMPTPGIPESLNVLLHELKGLGLSFCME</sequence>
<reference key="1">
    <citation type="journal article" date="2002" name="Int. J. Syst. Evol. Microbiol.">
        <title>Phylogenetic, amino acid content and indel analyses of the beta subunit of DNA-dependent RNA polymerase of Gram-positive and Gram-negative bacteria.</title>
        <authorList>
            <person name="Morse R."/>
            <person name="O'Hanlon K."/>
            <person name="Collins M.D."/>
        </authorList>
    </citation>
    <scope>NUCLEOTIDE SEQUENCE [GENOMIC DNA]</scope>
    <source>
        <strain>ATCC 700135 / DSM 104739 / CCUG 47700 / JCM 15983 / NCTC 12856 / VPB 4874</strain>
    </source>
</reference>
<dbReference type="EC" id="2.7.7.6" evidence="1"/>
<dbReference type="EMBL" id="Y16470">
    <property type="protein sequence ID" value="CAC10563.1"/>
    <property type="molecule type" value="Genomic_DNA"/>
</dbReference>
<dbReference type="SMR" id="Q9F3X8"/>
<dbReference type="STRING" id="36874.HQ34_00335"/>
<dbReference type="eggNOG" id="COG0085">
    <property type="taxonomic scope" value="Bacteria"/>
</dbReference>
<dbReference type="GO" id="GO:0000428">
    <property type="term" value="C:DNA-directed RNA polymerase complex"/>
    <property type="evidence" value="ECO:0007669"/>
    <property type="project" value="UniProtKB-KW"/>
</dbReference>
<dbReference type="GO" id="GO:0003677">
    <property type="term" value="F:DNA binding"/>
    <property type="evidence" value="ECO:0007669"/>
    <property type="project" value="UniProtKB-UniRule"/>
</dbReference>
<dbReference type="GO" id="GO:0003899">
    <property type="term" value="F:DNA-directed RNA polymerase activity"/>
    <property type="evidence" value="ECO:0007669"/>
    <property type="project" value="UniProtKB-UniRule"/>
</dbReference>
<dbReference type="GO" id="GO:0032549">
    <property type="term" value="F:ribonucleoside binding"/>
    <property type="evidence" value="ECO:0007669"/>
    <property type="project" value="InterPro"/>
</dbReference>
<dbReference type="GO" id="GO:0006351">
    <property type="term" value="P:DNA-templated transcription"/>
    <property type="evidence" value="ECO:0007669"/>
    <property type="project" value="UniProtKB-UniRule"/>
</dbReference>
<dbReference type="CDD" id="cd00653">
    <property type="entry name" value="RNA_pol_B_RPB2"/>
    <property type="match status" value="1"/>
</dbReference>
<dbReference type="FunFam" id="3.90.1800.10:FF:000001">
    <property type="entry name" value="DNA-directed RNA polymerase subunit beta"/>
    <property type="match status" value="1"/>
</dbReference>
<dbReference type="Gene3D" id="2.40.50.100">
    <property type="match status" value="1"/>
</dbReference>
<dbReference type="Gene3D" id="2.40.50.150">
    <property type="match status" value="1"/>
</dbReference>
<dbReference type="Gene3D" id="3.90.1100.10">
    <property type="match status" value="2"/>
</dbReference>
<dbReference type="Gene3D" id="2.40.270.10">
    <property type="entry name" value="DNA-directed RNA polymerase, subunit 2, domain 6"/>
    <property type="match status" value="3"/>
</dbReference>
<dbReference type="Gene3D" id="3.90.1800.10">
    <property type="entry name" value="RNA polymerase alpha subunit dimerisation domain"/>
    <property type="match status" value="1"/>
</dbReference>
<dbReference type="HAMAP" id="MF_01321">
    <property type="entry name" value="RNApol_bact_RpoB"/>
    <property type="match status" value="1"/>
</dbReference>
<dbReference type="InterPro" id="IPR019462">
    <property type="entry name" value="DNA-dir_RNA_pol_bsu_external_1"/>
</dbReference>
<dbReference type="InterPro" id="IPR015712">
    <property type="entry name" value="DNA-dir_RNA_pol_su2"/>
</dbReference>
<dbReference type="InterPro" id="IPR007120">
    <property type="entry name" value="DNA-dir_RNAP_su2_dom"/>
</dbReference>
<dbReference type="InterPro" id="IPR037033">
    <property type="entry name" value="DNA-dir_RNAP_su2_hyb_sf"/>
</dbReference>
<dbReference type="InterPro" id="IPR010243">
    <property type="entry name" value="RNA_pol_bsu_bac"/>
</dbReference>
<dbReference type="InterPro" id="IPR007121">
    <property type="entry name" value="RNA_pol_bsu_CS"/>
</dbReference>
<dbReference type="InterPro" id="IPR007644">
    <property type="entry name" value="RNA_pol_bsu_protrusion"/>
</dbReference>
<dbReference type="InterPro" id="IPR007642">
    <property type="entry name" value="RNA_pol_Rpb2_2"/>
</dbReference>
<dbReference type="InterPro" id="IPR007645">
    <property type="entry name" value="RNA_pol_Rpb2_3"/>
</dbReference>
<dbReference type="InterPro" id="IPR007641">
    <property type="entry name" value="RNA_pol_Rpb2_7"/>
</dbReference>
<dbReference type="InterPro" id="IPR014724">
    <property type="entry name" value="RNA_pol_RPB2_OB-fold"/>
</dbReference>
<dbReference type="NCBIfam" id="NF001616">
    <property type="entry name" value="PRK00405.1"/>
    <property type="match status" value="1"/>
</dbReference>
<dbReference type="NCBIfam" id="TIGR02013">
    <property type="entry name" value="rpoB"/>
    <property type="match status" value="1"/>
</dbReference>
<dbReference type="PANTHER" id="PTHR20856">
    <property type="entry name" value="DNA-DIRECTED RNA POLYMERASE I SUBUNIT 2"/>
    <property type="match status" value="1"/>
</dbReference>
<dbReference type="Pfam" id="PF04563">
    <property type="entry name" value="RNA_pol_Rpb2_1"/>
    <property type="match status" value="1"/>
</dbReference>
<dbReference type="Pfam" id="PF04561">
    <property type="entry name" value="RNA_pol_Rpb2_2"/>
    <property type="match status" value="2"/>
</dbReference>
<dbReference type="Pfam" id="PF04565">
    <property type="entry name" value="RNA_pol_Rpb2_3"/>
    <property type="match status" value="1"/>
</dbReference>
<dbReference type="Pfam" id="PF10385">
    <property type="entry name" value="RNA_pol_Rpb2_45"/>
    <property type="match status" value="1"/>
</dbReference>
<dbReference type="Pfam" id="PF00562">
    <property type="entry name" value="RNA_pol_Rpb2_6"/>
    <property type="match status" value="1"/>
</dbReference>
<dbReference type="Pfam" id="PF04560">
    <property type="entry name" value="RNA_pol_Rpb2_7"/>
    <property type="match status" value="1"/>
</dbReference>
<dbReference type="SUPFAM" id="SSF64484">
    <property type="entry name" value="beta and beta-prime subunits of DNA dependent RNA-polymerase"/>
    <property type="match status" value="1"/>
</dbReference>
<dbReference type="PROSITE" id="PS01166">
    <property type="entry name" value="RNA_POL_BETA"/>
    <property type="match status" value="1"/>
</dbReference>
<protein>
    <recommendedName>
        <fullName evidence="1">DNA-directed RNA polymerase subunit beta</fullName>
        <shortName evidence="1">RNAP subunit beta</shortName>
        <ecNumber evidence="1">2.7.7.6</ecNumber>
    </recommendedName>
    <alternativeName>
        <fullName evidence="1">RNA polymerase subunit beta</fullName>
    </alternativeName>
    <alternativeName>
        <fullName evidence="1">Transcriptase subunit beta</fullName>
    </alternativeName>
</protein>